<sequence length="262" mass="27332">MSVTNKVLVLKVGGALLQCEMGMARLMDTARQLLEKGEQVVLVHGGGCLVDEQLKANGMETVKLDGLRVTPAEQMPIIAGALAGTSNKLLQGAAAKAGVVSMGMSLCDANMVTAVIKDERLGMVGEVSPKDAKALEFILAQGWLPIISSIAMGEDGELLNVNADQAASVLAKLLGGKLVLLSDVSGVLDGKGKLIPSLNSQEIDELVKLGVIEKGMKVKVEAALEVAQWLGQPVQVASWRDSGQMAALIKGEAVGTQIQPQE</sequence>
<organism>
    <name type="scientific">Shewanella amazonensis (strain ATCC BAA-1098 / SB2B)</name>
    <dbReference type="NCBI Taxonomy" id="326297"/>
    <lineage>
        <taxon>Bacteria</taxon>
        <taxon>Pseudomonadati</taxon>
        <taxon>Pseudomonadota</taxon>
        <taxon>Gammaproteobacteria</taxon>
        <taxon>Alteromonadales</taxon>
        <taxon>Shewanellaceae</taxon>
        <taxon>Shewanella</taxon>
    </lineage>
</organism>
<proteinExistence type="inferred from homology"/>
<keyword id="KW-0028">Amino-acid biosynthesis</keyword>
<keyword id="KW-0055">Arginine biosynthesis</keyword>
<keyword id="KW-0067">ATP-binding</keyword>
<keyword id="KW-0963">Cytoplasm</keyword>
<keyword id="KW-0418">Kinase</keyword>
<keyword id="KW-0547">Nucleotide-binding</keyword>
<keyword id="KW-1185">Reference proteome</keyword>
<keyword id="KW-0808">Transferase</keyword>
<dbReference type="EC" id="2.7.2.8" evidence="1"/>
<dbReference type="EMBL" id="CP000507">
    <property type="protein sequence ID" value="ABL98468.1"/>
    <property type="molecule type" value="Genomic_DNA"/>
</dbReference>
<dbReference type="RefSeq" id="WP_011758378.1">
    <property type="nucleotide sequence ID" value="NC_008700.1"/>
</dbReference>
<dbReference type="SMR" id="A1S262"/>
<dbReference type="STRING" id="326297.Sama_0257"/>
<dbReference type="KEGG" id="saz:Sama_0257"/>
<dbReference type="eggNOG" id="COG0548">
    <property type="taxonomic scope" value="Bacteria"/>
</dbReference>
<dbReference type="HOGENOM" id="CLU_053680_1_1_6"/>
<dbReference type="OrthoDB" id="5915023at2"/>
<dbReference type="UniPathway" id="UPA00068">
    <property type="reaction ID" value="UER00107"/>
</dbReference>
<dbReference type="Proteomes" id="UP000009175">
    <property type="component" value="Chromosome"/>
</dbReference>
<dbReference type="GO" id="GO:0005737">
    <property type="term" value="C:cytoplasm"/>
    <property type="evidence" value="ECO:0007669"/>
    <property type="project" value="UniProtKB-SubCell"/>
</dbReference>
<dbReference type="GO" id="GO:0003991">
    <property type="term" value="F:acetylglutamate kinase activity"/>
    <property type="evidence" value="ECO:0007669"/>
    <property type="project" value="UniProtKB-UniRule"/>
</dbReference>
<dbReference type="GO" id="GO:0005524">
    <property type="term" value="F:ATP binding"/>
    <property type="evidence" value="ECO:0007669"/>
    <property type="project" value="UniProtKB-UniRule"/>
</dbReference>
<dbReference type="GO" id="GO:0042450">
    <property type="term" value="P:arginine biosynthetic process via ornithine"/>
    <property type="evidence" value="ECO:0007669"/>
    <property type="project" value="UniProtKB-UniRule"/>
</dbReference>
<dbReference type="GO" id="GO:0006526">
    <property type="term" value="P:L-arginine biosynthetic process"/>
    <property type="evidence" value="ECO:0007669"/>
    <property type="project" value="UniProtKB-UniPathway"/>
</dbReference>
<dbReference type="Gene3D" id="3.40.1160.10">
    <property type="entry name" value="Acetylglutamate kinase-like"/>
    <property type="match status" value="1"/>
</dbReference>
<dbReference type="HAMAP" id="MF_00082">
    <property type="entry name" value="ArgB"/>
    <property type="match status" value="1"/>
</dbReference>
<dbReference type="InterPro" id="IPR036393">
    <property type="entry name" value="AceGlu_kinase-like_sf"/>
</dbReference>
<dbReference type="InterPro" id="IPR004662">
    <property type="entry name" value="AcgluKinase_fam"/>
</dbReference>
<dbReference type="InterPro" id="IPR037528">
    <property type="entry name" value="ArgB"/>
</dbReference>
<dbReference type="InterPro" id="IPR001048">
    <property type="entry name" value="Asp/Glu/Uridylate_kinase"/>
</dbReference>
<dbReference type="NCBIfam" id="TIGR00761">
    <property type="entry name" value="argB"/>
    <property type="match status" value="1"/>
</dbReference>
<dbReference type="PANTHER" id="PTHR23342">
    <property type="entry name" value="N-ACETYLGLUTAMATE SYNTHASE"/>
    <property type="match status" value="1"/>
</dbReference>
<dbReference type="PANTHER" id="PTHR23342:SF0">
    <property type="entry name" value="N-ACETYLGLUTAMATE SYNTHASE, MITOCHONDRIAL"/>
    <property type="match status" value="1"/>
</dbReference>
<dbReference type="Pfam" id="PF00696">
    <property type="entry name" value="AA_kinase"/>
    <property type="match status" value="1"/>
</dbReference>
<dbReference type="PIRSF" id="PIRSF000728">
    <property type="entry name" value="NAGK"/>
    <property type="match status" value="1"/>
</dbReference>
<dbReference type="SUPFAM" id="SSF53633">
    <property type="entry name" value="Carbamate kinase-like"/>
    <property type="match status" value="1"/>
</dbReference>
<feature type="chain" id="PRO_1000010540" description="Acetylglutamate kinase">
    <location>
        <begin position="1"/>
        <end position="262"/>
    </location>
</feature>
<feature type="binding site" evidence="1">
    <location>
        <begin position="46"/>
        <end position="47"/>
    </location>
    <ligand>
        <name>substrate</name>
    </ligand>
</feature>
<feature type="binding site" evidence="1">
    <location>
        <position position="68"/>
    </location>
    <ligand>
        <name>substrate</name>
    </ligand>
</feature>
<feature type="binding site" evidence="1">
    <location>
        <position position="160"/>
    </location>
    <ligand>
        <name>substrate</name>
    </ligand>
</feature>
<feature type="site" description="Transition state stabilizer" evidence="1">
    <location>
        <position position="11"/>
    </location>
</feature>
<feature type="site" description="Transition state stabilizer" evidence="1">
    <location>
        <position position="219"/>
    </location>
</feature>
<accession>A1S262</accession>
<evidence type="ECO:0000255" key="1">
    <source>
        <dbReference type="HAMAP-Rule" id="MF_00082"/>
    </source>
</evidence>
<comment type="function">
    <text evidence="1">Catalyzes the ATP-dependent phosphorylation of N-acetyl-L-glutamate.</text>
</comment>
<comment type="catalytic activity">
    <reaction evidence="1">
        <text>N-acetyl-L-glutamate + ATP = N-acetyl-L-glutamyl 5-phosphate + ADP</text>
        <dbReference type="Rhea" id="RHEA:14629"/>
        <dbReference type="ChEBI" id="CHEBI:30616"/>
        <dbReference type="ChEBI" id="CHEBI:44337"/>
        <dbReference type="ChEBI" id="CHEBI:57936"/>
        <dbReference type="ChEBI" id="CHEBI:456216"/>
        <dbReference type="EC" id="2.7.2.8"/>
    </reaction>
</comment>
<comment type="pathway">
    <text evidence="1">Amino-acid biosynthesis; L-arginine biosynthesis; N(2)-acetyl-L-ornithine from L-glutamate: step 2/4.</text>
</comment>
<comment type="subcellular location">
    <subcellularLocation>
        <location evidence="1">Cytoplasm</location>
    </subcellularLocation>
</comment>
<comment type="similarity">
    <text evidence="1">Belongs to the acetylglutamate kinase family. ArgB subfamily.</text>
</comment>
<reference key="1">
    <citation type="submission" date="2006-12" db="EMBL/GenBank/DDBJ databases">
        <title>Complete sequence of Shewanella amazonensis SB2B.</title>
        <authorList>
            <consortium name="US DOE Joint Genome Institute"/>
            <person name="Copeland A."/>
            <person name="Lucas S."/>
            <person name="Lapidus A."/>
            <person name="Barry K."/>
            <person name="Detter J.C."/>
            <person name="Glavina del Rio T."/>
            <person name="Hammon N."/>
            <person name="Israni S."/>
            <person name="Dalin E."/>
            <person name="Tice H."/>
            <person name="Pitluck S."/>
            <person name="Munk A.C."/>
            <person name="Brettin T."/>
            <person name="Bruce D."/>
            <person name="Han C."/>
            <person name="Tapia R."/>
            <person name="Gilna P."/>
            <person name="Schmutz J."/>
            <person name="Larimer F."/>
            <person name="Land M."/>
            <person name="Hauser L."/>
            <person name="Kyrpides N."/>
            <person name="Mikhailova N."/>
            <person name="Fredrickson J."/>
            <person name="Richardson P."/>
        </authorList>
    </citation>
    <scope>NUCLEOTIDE SEQUENCE [LARGE SCALE GENOMIC DNA]</scope>
    <source>
        <strain>ATCC BAA-1098 / SB2B</strain>
    </source>
</reference>
<name>ARGB_SHEAM</name>
<gene>
    <name evidence="1" type="primary">argB</name>
    <name type="ordered locus">Sama_0257</name>
</gene>
<protein>
    <recommendedName>
        <fullName evidence="1">Acetylglutamate kinase</fullName>
        <ecNumber evidence="1">2.7.2.8</ecNumber>
    </recommendedName>
    <alternativeName>
        <fullName evidence="1">N-acetyl-L-glutamate 5-phosphotransferase</fullName>
    </alternativeName>
    <alternativeName>
        <fullName evidence="1">NAG kinase</fullName>
        <shortName evidence="1">NAGK</shortName>
    </alternativeName>
</protein>